<sequence length="679" mass="74161">MSKIRVYELAKELRVPSKVLINVLMDEFGVEVKNHMSVIEDEDAALIKELLAGSEANSELVAEYEAELAEEVNNAAKKKKKRKKGSEDDNLEQDVEVIEIGKTITVKELAEKLNKPVNDVIKTLIFTGVMAAINQEIDFETAEKVAEKYEVAVYEKEEENTLEEFEEETDVEEENLAKRPPIITVMGHVDHGKTSLLDAIRKSKVTSTEAGGITQHIGAYTVEVNGETLTFLDTPGHEAFTAMRARGAQITDVVILVVAADDGIMPQTVEAINHCKAANVPMIVAINKMDREGANPDRVKQELTEHGLVVEDWGGDIIAVPVSAKTRENIDTLLEMVLLTSEMQELKADAGRKAKGTVVEAKLDKGRGAVATLLVQNGTLHMGDSIIVGSTYGRIRAMFDDSGKKIKSAGPSIPVEVLGLSEVPAAGDRFTVVKDEKTARNMAEARKEKIRQESFATSHRVSLEDLYSQIKEGSVKELSVIVKADVQGSVEAIKASLEKLSTDDVKVRVIHGAVGAISETDITLAAASNAIVIGFNVRPDNNAVAASERDGVEVKTYRVIYDAIEDIKSAMIGMLDPEYKEVVLGTAEIRATYKISNVGTIAGGYVLTGKLVRNADVRVIREGIVIFESKLASLKRFKDDVKEVNAGYECGFSVEKFNDIKEGDIIEAYTMEAVQRKEL</sequence>
<proteinExistence type="inferred from homology"/>
<dbReference type="EMBL" id="BA000016">
    <property type="protein sequence ID" value="BAB81392.1"/>
    <property type="molecule type" value="Genomic_DNA"/>
</dbReference>
<dbReference type="RefSeq" id="WP_003449445.1">
    <property type="nucleotide sequence ID" value="NC_003366.1"/>
</dbReference>
<dbReference type="SMR" id="Q8XJR8"/>
<dbReference type="STRING" id="195102.gene:10490950"/>
<dbReference type="GeneID" id="93001776"/>
<dbReference type="KEGG" id="cpe:CPE1686"/>
<dbReference type="HOGENOM" id="CLU_006301_5_1_9"/>
<dbReference type="Proteomes" id="UP000000818">
    <property type="component" value="Chromosome"/>
</dbReference>
<dbReference type="GO" id="GO:0005829">
    <property type="term" value="C:cytosol"/>
    <property type="evidence" value="ECO:0007669"/>
    <property type="project" value="TreeGrafter"/>
</dbReference>
<dbReference type="GO" id="GO:0005525">
    <property type="term" value="F:GTP binding"/>
    <property type="evidence" value="ECO:0007669"/>
    <property type="project" value="UniProtKB-KW"/>
</dbReference>
<dbReference type="GO" id="GO:0003924">
    <property type="term" value="F:GTPase activity"/>
    <property type="evidence" value="ECO:0007669"/>
    <property type="project" value="UniProtKB-UniRule"/>
</dbReference>
<dbReference type="GO" id="GO:0003743">
    <property type="term" value="F:translation initiation factor activity"/>
    <property type="evidence" value="ECO:0007669"/>
    <property type="project" value="UniProtKB-UniRule"/>
</dbReference>
<dbReference type="CDD" id="cd01887">
    <property type="entry name" value="IF2_eIF5B"/>
    <property type="match status" value="1"/>
</dbReference>
<dbReference type="CDD" id="cd03702">
    <property type="entry name" value="IF2_mtIF2_II"/>
    <property type="match status" value="1"/>
</dbReference>
<dbReference type="CDD" id="cd03692">
    <property type="entry name" value="mtIF2_IVc"/>
    <property type="match status" value="1"/>
</dbReference>
<dbReference type="FunFam" id="2.40.30.10:FF:000007">
    <property type="entry name" value="Translation initiation factor IF-2"/>
    <property type="match status" value="1"/>
</dbReference>
<dbReference type="FunFam" id="2.40.30.10:FF:000008">
    <property type="entry name" value="Translation initiation factor IF-2"/>
    <property type="match status" value="1"/>
</dbReference>
<dbReference type="FunFam" id="3.40.50.10050:FF:000001">
    <property type="entry name" value="Translation initiation factor IF-2"/>
    <property type="match status" value="1"/>
</dbReference>
<dbReference type="FunFam" id="3.40.50.300:FF:000019">
    <property type="entry name" value="Translation initiation factor IF-2"/>
    <property type="match status" value="1"/>
</dbReference>
<dbReference type="Gene3D" id="1.10.10.2480">
    <property type="match status" value="1"/>
</dbReference>
<dbReference type="Gene3D" id="3.40.50.300">
    <property type="entry name" value="P-loop containing nucleotide triphosphate hydrolases"/>
    <property type="match status" value="1"/>
</dbReference>
<dbReference type="Gene3D" id="2.40.30.10">
    <property type="entry name" value="Translation factors"/>
    <property type="match status" value="2"/>
</dbReference>
<dbReference type="Gene3D" id="3.40.50.10050">
    <property type="entry name" value="Translation initiation factor IF- 2, domain 3"/>
    <property type="match status" value="1"/>
</dbReference>
<dbReference type="HAMAP" id="MF_00100_B">
    <property type="entry name" value="IF_2_B"/>
    <property type="match status" value="1"/>
</dbReference>
<dbReference type="InterPro" id="IPR053905">
    <property type="entry name" value="EF-G-like_DII"/>
</dbReference>
<dbReference type="InterPro" id="IPR004161">
    <property type="entry name" value="EFTu-like_2"/>
</dbReference>
<dbReference type="InterPro" id="IPR044145">
    <property type="entry name" value="IF2_II"/>
</dbReference>
<dbReference type="InterPro" id="IPR006847">
    <property type="entry name" value="IF2_N"/>
</dbReference>
<dbReference type="InterPro" id="IPR027417">
    <property type="entry name" value="P-loop_NTPase"/>
</dbReference>
<dbReference type="InterPro" id="IPR005225">
    <property type="entry name" value="Small_GTP-bd"/>
</dbReference>
<dbReference type="InterPro" id="IPR000795">
    <property type="entry name" value="T_Tr_GTP-bd_dom"/>
</dbReference>
<dbReference type="InterPro" id="IPR000178">
    <property type="entry name" value="TF_IF2_bacterial-like"/>
</dbReference>
<dbReference type="InterPro" id="IPR015760">
    <property type="entry name" value="TIF_IF2"/>
</dbReference>
<dbReference type="InterPro" id="IPR023115">
    <property type="entry name" value="TIF_IF2_dom3"/>
</dbReference>
<dbReference type="InterPro" id="IPR036925">
    <property type="entry name" value="TIF_IF2_dom3_sf"/>
</dbReference>
<dbReference type="InterPro" id="IPR009000">
    <property type="entry name" value="Transl_B-barrel_sf"/>
</dbReference>
<dbReference type="NCBIfam" id="TIGR00487">
    <property type="entry name" value="IF-2"/>
    <property type="match status" value="1"/>
</dbReference>
<dbReference type="NCBIfam" id="TIGR00231">
    <property type="entry name" value="small_GTP"/>
    <property type="match status" value="1"/>
</dbReference>
<dbReference type="PANTHER" id="PTHR43381:SF5">
    <property type="entry name" value="TR-TYPE G DOMAIN-CONTAINING PROTEIN"/>
    <property type="match status" value="1"/>
</dbReference>
<dbReference type="PANTHER" id="PTHR43381">
    <property type="entry name" value="TRANSLATION INITIATION FACTOR IF-2-RELATED"/>
    <property type="match status" value="1"/>
</dbReference>
<dbReference type="Pfam" id="PF22042">
    <property type="entry name" value="EF-G_D2"/>
    <property type="match status" value="1"/>
</dbReference>
<dbReference type="Pfam" id="PF00009">
    <property type="entry name" value="GTP_EFTU"/>
    <property type="match status" value="1"/>
</dbReference>
<dbReference type="Pfam" id="PF03144">
    <property type="entry name" value="GTP_EFTU_D2"/>
    <property type="match status" value="1"/>
</dbReference>
<dbReference type="Pfam" id="PF11987">
    <property type="entry name" value="IF-2"/>
    <property type="match status" value="1"/>
</dbReference>
<dbReference type="Pfam" id="PF04760">
    <property type="entry name" value="IF2_N"/>
    <property type="match status" value="2"/>
</dbReference>
<dbReference type="SUPFAM" id="SSF52156">
    <property type="entry name" value="Initiation factor IF2/eIF5b, domain 3"/>
    <property type="match status" value="1"/>
</dbReference>
<dbReference type="SUPFAM" id="SSF52540">
    <property type="entry name" value="P-loop containing nucleoside triphosphate hydrolases"/>
    <property type="match status" value="1"/>
</dbReference>
<dbReference type="SUPFAM" id="SSF50447">
    <property type="entry name" value="Translation proteins"/>
    <property type="match status" value="2"/>
</dbReference>
<dbReference type="PROSITE" id="PS51722">
    <property type="entry name" value="G_TR_2"/>
    <property type="match status" value="1"/>
</dbReference>
<dbReference type="PROSITE" id="PS01176">
    <property type="entry name" value="IF2"/>
    <property type="match status" value="1"/>
</dbReference>
<gene>
    <name evidence="2" type="primary">infB</name>
    <name type="ordered locus">CPE1686</name>
</gene>
<reference key="1">
    <citation type="journal article" date="2002" name="Proc. Natl. Acad. Sci. U.S.A.">
        <title>Complete genome sequence of Clostridium perfringens, an anaerobic flesh-eater.</title>
        <authorList>
            <person name="Shimizu T."/>
            <person name="Ohtani K."/>
            <person name="Hirakawa H."/>
            <person name="Ohshima K."/>
            <person name="Yamashita A."/>
            <person name="Shiba T."/>
            <person name="Ogasawara N."/>
            <person name="Hattori M."/>
            <person name="Kuhara S."/>
            <person name="Hayashi H."/>
        </authorList>
    </citation>
    <scope>NUCLEOTIDE SEQUENCE [LARGE SCALE GENOMIC DNA]</scope>
    <source>
        <strain>13 / Type A</strain>
    </source>
</reference>
<evidence type="ECO:0000250" key="1"/>
<evidence type="ECO:0000255" key="2">
    <source>
        <dbReference type="HAMAP-Rule" id="MF_00100"/>
    </source>
</evidence>
<comment type="function">
    <text evidence="2">One of the essential components for the initiation of protein synthesis. Protects formylmethionyl-tRNA from spontaneous hydrolysis and promotes its binding to the 30S ribosomal subunits. Also involved in the hydrolysis of GTP during the formation of the 70S ribosomal complex.</text>
</comment>
<comment type="subcellular location">
    <subcellularLocation>
        <location evidence="2">Cytoplasm</location>
    </subcellularLocation>
</comment>
<comment type="similarity">
    <text evidence="2">Belongs to the TRAFAC class translation factor GTPase superfamily. Classic translation factor GTPase family. IF-2 subfamily.</text>
</comment>
<feature type="chain" id="PRO_0000137194" description="Translation initiation factor IF-2">
    <location>
        <begin position="1"/>
        <end position="679"/>
    </location>
</feature>
<feature type="domain" description="tr-type G">
    <location>
        <begin position="178"/>
        <end position="347"/>
    </location>
</feature>
<feature type="region of interest" description="G1" evidence="1">
    <location>
        <begin position="187"/>
        <end position="194"/>
    </location>
</feature>
<feature type="region of interest" description="G2" evidence="1">
    <location>
        <begin position="212"/>
        <end position="216"/>
    </location>
</feature>
<feature type="region of interest" description="G3" evidence="1">
    <location>
        <begin position="233"/>
        <end position="236"/>
    </location>
</feature>
<feature type="region of interest" description="G4" evidence="1">
    <location>
        <begin position="287"/>
        <end position="290"/>
    </location>
</feature>
<feature type="region of interest" description="G5" evidence="1">
    <location>
        <begin position="323"/>
        <end position="325"/>
    </location>
</feature>
<feature type="binding site" evidence="2">
    <location>
        <begin position="187"/>
        <end position="194"/>
    </location>
    <ligand>
        <name>GTP</name>
        <dbReference type="ChEBI" id="CHEBI:37565"/>
    </ligand>
</feature>
<feature type="binding site" evidence="2">
    <location>
        <begin position="233"/>
        <end position="237"/>
    </location>
    <ligand>
        <name>GTP</name>
        <dbReference type="ChEBI" id="CHEBI:37565"/>
    </ligand>
</feature>
<feature type="binding site" evidence="2">
    <location>
        <begin position="287"/>
        <end position="290"/>
    </location>
    <ligand>
        <name>GTP</name>
        <dbReference type="ChEBI" id="CHEBI:37565"/>
    </ligand>
</feature>
<keyword id="KW-0963">Cytoplasm</keyword>
<keyword id="KW-0342">GTP-binding</keyword>
<keyword id="KW-0396">Initiation factor</keyword>
<keyword id="KW-0547">Nucleotide-binding</keyword>
<keyword id="KW-0648">Protein biosynthesis</keyword>
<keyword id="KW-1185">Reference proteome</keyword>
<accession>Q8XJR8</accession>
<organism>
    <name type="scientific">Clostridium perfringens (strain 13 / Type A)</name>
    <dbReference type="NCBI Taxonomy" id="195102"/>
    <lineage>
        <taxon>Bacteria</taxon>
        <taxon>Bacillati</taxon>
        <taxon>Bacillota</taxon>
        <taxon>Clostridia</taxon>
        <taxon>Eubacteriales</taxon>
        <taxon>Clostridiaceae</taxon>
        <taxon>Clostridium</taxon>
    </lineage>
</organism>
<protein>
    <recommendedName>
        <fullName evidence="2">Translation initiation factor IF-2</fullName>
    </recommendedName>
</protein>
<name>IF2_CLOPE</name>